<reference key="1">
    <citation type="submission" date="2008-10" db="EMBL/GenBank/DDBJ databases">
        <title>Genome sequence of Bacillus cereus B4264.</title>
        <authorList>
            <person name="Dodson R.J."/>
            <person name="Durkin A.S."/>
            <person name="Rosovitz M.J."/>
            <person name="Rasko D.A."/>
            <person name="Hoffmaster A."/>
            <person name="Ravel J."/>
            <person name="Sutton G."/>
        </authorList>
    </citation>
    <scope>NUCLEOTIDE SEQUENCE [LARGE SCALE GENOMIC DNA]</scope>
    <source>
        <strain>B4264</strain>
    </source>
</reference>
<protein>
    <recommendedName>
        <fullName evidence="1">Riboflavin biosynthesis protein RibBA</fullName>
    </recommendedName>
    <domain>
        <recommendedName>
            <fullName evidence="1">3,4-dihydroxy-2-butanone 4-phosphate synthase</fullName>
            <shortName evidence="1">DHBP synthase</shortName>
            <ecNumber evidence="1">4.1.99.12</ecNumber>
        </recommendedName>
    </domain>
    <domain>
        <recommendedName>
            <fullName evidence="1">GTP cyclohydrolase-2</fullName>
            <ecNumber evidence="1">3.5.4.25</ecNumber>
        </recommendedName>
        <alternativeName>
            <fullName evidence="1">GTP cyclohydrolase II</fullName>
        </alternativeName>
    </domain>
</protein>
<gene>
    <name evidence="1" type="primary">ribBA</name>
    <name type="ordered locus">BCB4264_A4222</name>
</gene>
<organism>
    <name type="scientific">Bacillus cereus (strain B4264)</name>
    <dbReference type="NCBI Taxonomy" id="405532"/>
    <lineage>
        <taxon>Bacteria</taxon>
        <taxon>Bacillati</taxon>
        <taxon>Bacillota</taxon>
        <taxon>Bacilli</taxon>
        <taxon>Bacillales</taxon>
        <taxon>Bacillaceae</taxon>
        <taxon>Bacillus</taxon>
        <taxon>Bacillus cereus group</taxon>
    </lineage>
</organism>
<name>RIBBA_BACC4</name>
<comment type="function">
    <text evidence="1">Catalyzes the conversion of D-ribulose 5-phosphate to formate and 3,4-dihydroxy-2-butanone 4-phosphate.</text>
</comment>
<comment type="function">
    <text evidence="1">Catalyzes the conversion of GTP to 2,5-diamino-6-ribosylamino-4(3H)-pyrimidinone 5'-phosphate (DARP), formate and pyrophosphate.</text>
</comment>
<comment type="catalytic activity">
    <reaction evidence="1">
        <text>D-ribulose 5-phosphate = (2S)-2-hydroxy-3-oxobutyl phosphate + formate + H(+)</text>
        <dbReference type="Rhea" id="RHEA:18457"/>
        <dbReference type="ChEBI" id="CHEBI:15378"/>
        <dbReference type="ChEBI" id="CHEBI:15740"/>
        <dbReference type="ChEBI" id="CHEBI:58121"/>
        <dbReference type="ChEBI" id="CHEBI:58830"/>
        <dbReference type="EC" id="4.1.99.12"/>
    </reaction>
</comment>
<comment type="catalytic activity">
    <reaction evidence="1">
        <text>GTP + 4 H2O = 2,5-diamino-6-hydroxy-4-(5-phosphoribosylamino)-pyrimidine + formate + 2 phosphate + 3 H(+)</text>
        <dbReference type="Rhea" id="RHEA:23704"/>
        <dbReference type="ChEBI" id="CHEBI:15377"/>
        <dbReference type="ChEBI" id="CHEBI:15378"/>
        <dbReference type="ChEBI" id="CHEBI:15740"/>
        <dbReference type="ChEBI" id="CHEBI:37565"/>
        <dbReference type="ChEBI" id="CHEBI:43474"/>
        <dbReference type="ChEBI" id="CHEBI:58614"/>
        <dbReference type="EC" id="3.5.4.25"/>
    </reaction>
</comment>
<comment type="cofactor">
    <cofactor evidence="1">
        <name>Mg(2+)</name>
        <dbReference type="ChEBI" id="CHEBI:18420"/>
    </cofactor>
    <cofactor evidence="1">
        <name>Mn(2+)</name>
        <dbReference type="ChEBI" id="CHEBI:29035"/>
    </cofactor>
    <text evidence="1">Binds 2 divalent metal cations per subunit. Magnesium or manganese.</text>
</comment>
<comment type="cofactor">
    <cofactor evidence="1">
        <name>Zn(2+)</name>
        <dbReference type="ChEBI" id="CHEBI:29105"/>
    </cofactor>
    <text evidence="1">Binds 1 zinc ion per subunit.</text>
</comment>
<comment type="pathway">
    <text evidence="1">Cofactor biosynthesis; riboflavin biosynthesis; 2-hydroxy-3-oxobutyl phosphate from D-ribulose 5-phosphate: step 1/1.</text>
</comment>
<comment type="pathway">
    <text evidence="1">Cofactor biosynthesis; riboflavin biosynthesis; 5-amino-6-(D-ribitylamino)uracil from GTP: step 1/4.</text>
</comment>
<comment type="similarity">
    <text evidence="1">In the N-terminal section; belongs to the DHBP synthase family.</text>
</comment>
<comment type="similarity">
    <text evidence="1">In the C-terminal section; belongs to the GTP cyclohydrolase II family.</text>
</comment>
<accession>B7HAY4</accession>
<sequence length="397" mass="43928">MFHRIEEALEDLKKGKVVIVCDDENRENEGDFIALAEYITPETINFMITHGRGLVCVPITEGYAERLQLEPMVSHNTDSHHTAFTVSIDHVSTTTGISAHERATTIQELLNPASKGADFNRPGHIFPLIAKEGGVLRRAGHTEAAVDLAKLCGAEPAGVICEIINEDGTMARVPDLIECAKQFDIKMITIEDLIAYRRHHETLVTREVEITLPTDFGTFHAIGYSNSLDTKEHIALVKGDISTGEPVLVRVHSECLTGDVFGSHRCDCGPQLHAALAQIEREGKGVLLYMRQEGRGIGLLNKLRAYKLQEEGFDTVEANEKLGFPADLRDYGIGAQILKDLGLQSLRLLTNNPRKIAGLQGYDLEVIERVPLQMPAKEENKSYLQTKVNKLGHLLNL</sequence>
<dbReference type="EC" id="4.1.99.12" evidence="1"/>
<dbReference type="EC" id="3.5.4.25" evidence="1"/>
<dbReference type="EMBL" id="CP001176">
    <property type="protein sequence ID" value="ACK60726.1"/>
    <property type="molecule type" value="Genomic_DNA"/>
</dbReference>
<dbReference type="RefSeq" id="WP_000468975.1">
    <property type="nucleotide sequence ID" value="NC_011725.1"/>
</dbReference>
<dbReference type="SMR" id="B7HAY4"/>
<dbReference type="KEGG" id="bcb:BCB4264_A4222"/>
<dbReference type="HOGENOM" id="CLU_020273_1_2_9"/>
<dbReference type="UniPathway" id="UPA00275">
    <property type="reaction ID" value="UER00399"/>
</dbReference>
<dbReference type="UniPathway" id="UPA00275">
    <property type="reaction ID" value="UER00400"/>
</dbReference>
<dbReference type="Proteomes" id="UP000007096">
    <property type="component" value="Chromosome"/>
</dbReference>
<dbReference type="GO" id="GO:0005829">
    <property type="term" value="C:cytosol"/>
    <property type="evidence" value="ECO:0007669"/>
    <property type="project" value="TreeGrafter"/>
</dbReference>
<dbReference type="GO" id="GO:0008686">
    <property type="term" value="F:3,4-dihydroxy-2-butanone-4-phosphate synthase activity"/>
    <property type="evidence" value="ECO:0007669"/>
    <property type="project" value="UniProtKB-UniRule"/>
</dbReference>
<dbReference type="GO" id="GO:0005525">
    <property type="term" value="F:GTP binding"/>
    <property type="evidence" value="ECO:0007669"/>
    <property type="project" value="UniProtKB-KW"/>
</dbReference>
<dbReference type="GO" id="GO:0003935">
    <property type="term" value="F:GTP cyclohydrolase II activity"/>
    <property type="evidence" value="ECO:0007669"/>
    <property type="project" value="UniProtKB-UniRule"/>
</dbReference>
<dbReference type="GO" id="GO:0000287">
    <property type="term" value="F:magnesium ion binding"/>
    <property type="evidence" value="ECO:0007669"/>
    <property type="project" value="UniProtKB-UniRule"/>
</dbReference>
<dbReference type="GO" id="GO:0030145">
    <property type="term" value="F:manganese ion binding"/>
    <property type="evidence" value="ECO:0007669"/>
    <property type="project" value="UniProtKB-UniRule"/>
</dbReference>
<dbReference type="GO" id="GO:0008270">
    <property type="term" value="F:zinc ion binding"/>
    <property type="evidence" value="ECO:0007669"/>
    <property type="project" value="UniProtKB-UniRule"/>
</dbReference>
<dbReference type="GO" id="GO:0009231">
    <property type="term" value="P:riboflavin biosynthetic process"/>
    <property type="evidence" value="ECO:0007669"/>
    <property type="project" value="UniProtKB-UniRule"/>
</dbReference>
<dbReference type="CDD" id="cd00641">
    <property type="entry name" value="GTP_cyclohydro2"/>
    <property type="match status" value="1"/>
</dbReference>
<dbReference type="FunFam" id="3.40.50.10990:FF:000001">
    <property type="entry name" value="Riboflavin biosynthesis protein RibBA"/>
    <property type="match status" value="1"/>
</dbReference>
<dbReference type="FunFam" id="3.90.870.10:FF:000001">
    <property type="entry name" value="Riboflavin biosynthesis protein RibBA"/>
    <property type="match status" value="1"/>
</dbReference>
<dbReference type="Gene3D" id="3.90.870.10">
    <property type="entry name" value="DHBP synthase"/>
    <property type="match status" value="1"/>
</dbReference>
<dbReference type="Gene3D" id="3.40.50.10990">
    <property type="entry name" value="GTP cyclohydrolase II"/>
    <property type="match status" value="1"/>
</dbReference>
<dbReference type="HAMAP" id="MF_00179">
    <property type="entry name" value="RibA"/>
    <property type="match status" value="1"/>
</dbReference>
<dbReference type="HAMAP" id="MF_00180">
    <property type="entry name" value="RibB"/>
    <property type="match status" value="1"/>
</dbReference>
<dbReference type="HAMAP" id="MF_01283">
    <property type="entry name" value="RibBA"/>
    <property type="match status" value="1"/>
</dbReference>
<dbReference type="InterPro" id="IPR017945">
    <property type="entry name" value="DHBP_synth_RibB-like_a/b_dom"/>
</dbReference>
<dbReference type="InterPro" id="IPR000422">
    <property type="entry name" value="DHBP_synthase_RibB"/>
</dbReference>
<dbReference type="InterPro" id="IPR032677">
    <property type="entry name" value="GTP_cyclohydro_II"/>
</dbReference>
<dbReference type="InterPro" id="IPR000926">
    <property type="entry name" value="RibA"/>
</dbReference>
<dbReference type="InterPro" id="IPR036144">
    <property type="entry name" value="RibA-like_sf"/>
</dbReference>
<dbReference type="InterPro" id="IPR016299">
    <property type="entry name" value="Riboflavin_synth_RibBA"/>
</dbReference>
<dbReference type="NCBIfam" id="NF001591">
    <property type="entry name" value="PRK00393.1"/>
    <property type="match status" value="1"/>
</dbReference>
<dbReference type="NCBIfam" id="NF006803">
    <property type="entry name" value="PRK09311.1"/>
    <property type="match status" value="1"/>
</dbReference>
<dbReference type="NCBIfam" id="TIGR00505">
    <property type="entry name" value="ribA"/>
    <property type="match status" value="1"/>
</dbReference>
<dbReference type="NCBIfam" id="TIGR00506">
    <property type="entry name" value="ribB"/>
    <property type="match status" value="1"/>
</dbReference>
<dbReference type="PANTHER" id="PTHR21327:SF18">
    <property type="entry name" value="3,4-DIHYDROXY-2-BUTANONE 4-PHOSPHATE SYNTHASE"/>
    <property type="match status" value="1"/>
</dbReference>
<dbReference type="PANTHER" id="PTHR21327">
    <property type="entry name" value="GTP CYCLOHYDROLASE II-RELATED"/>
    <property type="match status" value="1"/>
</dbReference>
<dbReference type="Pfam" id="PF00926">
    <property type="entry name" value="DHBP_synthase"/>
    <property type="match status" value="1"/>
</dbReference>
<dbReference type="Pfam" id="PF00925">
    <property type="entry name" value="GTP_cyclohydro2"/>
    <property type="match status" value="1"/>
</dbReference>
<dbReference type="PIRSF" id="PIRSF001259">
    <property type="entry name" value="RibA"/>
    <property type="match status" value="1"/>
</dbReference>
<dbReference type="SUPFAM" id="SSF142695">
    <property type="entry name" value="RibA-like"/>
    <property type="match status" value="1"/>
</dbReference>
<dbReference type="SUPFAM" id="SSF55821">
    <property type="entry name" value="YrdC/RibB"/>
    <property type="match status" value="1"/>
</dbReference>
<evidence type="ECO:0000255" key="1">
    <source>
        <dbReference type="HAMAP-Rule" id="MF_01283"/>
    </source>
</evidence>
<feature type="chain" id="PRO_1000140362" description="Riboflavin biosynthesis protein RibBA">
    <location>
        <begin position="1"/>
        <end position="397"/>
    </location>
</feature>
<feature type="region of interest" description="DHBP synthase">
    <location>
        <begin position="1"/>
        <end position="199"/>
    </location>
</feature>
<feature type="region of interest" description="GTP cyclohydrolase II">
    <location>
        <begin position="200"/>
        <end position="397"/>
    </location>
</feature>
<feature type="active site" description="Proton acceptor; for GTP cyclohydrolase activity" evidence="1">
    <location>
        <position position="327"/>
    </location>
</feature>
<feature type="active site" description="Nucleophile; for GTP cyclohydrolase activity" evidence="1">
    <location>
        <position position="329"/>
    </location>
</feature>
<feature type="binding site" evidence="1">
    <location>
        <begin position="26"/>
        <end position="27"/>
    </location>
    <ligand>
        <name>D-ribulose 5-phosphate</name>
        <dbReference type="ChEBI" id="CHEBI:58121"/>
    </ligand>
</feature>
<feature type="binding site" evidence="1">
    <location>
        <position position="27"/>
    </location>
    <ligand>
        <name>Mg(2+)</name>
        <dbReference type="ChEBI" id="CHEBI:18420"/>
        <label>1</label>
    </ligand>
</feature>
<feature type="binding site" evidence="1">
    <location>
        <position position="27"/>
    </location>
    <ligand>
        <name>Mg(2+)</name>
        <dbReference type="ChEBI" id="CHEBI:18420"/>
        <label>2</label>
    </ligand>
</feature>
<feature type="binding site" evidence="1">
    <location>
        <position position="31"/>
    </location>
    <ligand>
        <name>D-ribulose 5-phosphate</name>
        <dbReference type="ChEBI" id="CHEBI:58121"/>
    </ligand>
</feature>
<feature type="binding site" evidence="1">
    <location>
        <begin position="138"/>
        <end position="142"/>
    </location>
    <ligand>
        <name>D-ribulose 5-phosphate</name>
        <dbReference type="ChEBI" id="CHEBI:58121"/>
    </ligand>
</feature>
<feature type="binding site" evidence="1">
    <location>
        <position position="141"/>
    </location>
    <ligand>
        <name>Mg(2+)</name>
        <dbReference type="ChEBI" id="CHEBI:18420"/>
        <label>2</label>
    </ligand>
</feature>
<feature type="binding site" evidence="1">
    <location>
        <position position="162"/>
    </location>
    <ligand>
        <name>D-ribulose 5-phosphate</name>
        <dbReference type="ChEBI" id="CHEBI:58121"/>
    </ligand>
</feature>
<feature type="binding site" evidence="1">
    <location>
        <begin position="250"/>
        <end position="254"/>
    </location>
    <ligand>
        <name>GTP</name>
        <dbReference type="ChEBI" id="CHEBI:37565"/>
    </ligand>
</feature>
<feature type="binding site" evidence="1">
    <location>
        <position position="255"/>
    </location>
    <ligand>
        <name>Zn(2+)</name>
        <dbReference type="ChEBI" id="CHEBI:29105"/>
        <note>catalytic</note>
    </ligand>
</feature>
<feature type="binding site" evidence="1">
    <location>
        <position position="266"/>
    </location>
    <ligand>
        <name>Zn(2+)</name>
        <dbReference type="ChEBI" id="CHEBI:29105"/>
        <note>catalytic</note>
    </ligand>
</feature>
<feature type="binding site" evidence="1">
    <location>
        <position position="268"/>
    </location>
    <ligand>
        <name>Zn(2+)</name>
        <dbReference type="ChEBI" id="CHEBI:29105"/>
        <note>catalytic</note>
    </ligand>
</feature>
<feature type="binding site" evidence="1">
    <location>
        <position position="271"/>
    </location>
    <ligand>
        <name>GTP</name>
        <dbReference type="ChEBI" id="CHEBI:37565"/>
    </ligand>
</feature>
<feature type="binding site" evidence="1">
    <location>
        <begin position="293"/>
        <end position="295"/>
    </location>
    <ligand>
        <name>GTP</name>
        <dbReference type="ChEBI" id="CHEBI:37565"/>
    </ligand>
</feature>
<feature type="binding site" evidence="1">
    <location>
        <position position="315"/>
    </location>
    <ligand>
        <name>GTP</name>
        <dbReference type="ChEBI" id="CHEBI:37565"/>
    </ligand>
</feature>
<feature type="binding site" evidence="1">
    <location>
        <position position="350"/>
    </location>
    <ligand>
        <name>GTP</name>
        <dbReference type="ChEBI" id="CHEBI:37565"/>
    </ligand>
</feature>
<feature type="binding site" evidence="1">
    <location>
        <position position="355"/>
    </location>
    <ligand>
        <name>GTP</name>
        <dbReference type="ChEBI" id="CHEBI:37565"/>
    </ligand>
</feature>
<feature type="site" description="Essential for DHBP synthase activity" evidence="1">
    <location>
        <position position="124"/>
    </location>
</feature>
<feature type="site" description="Essential for DHBP synthase activity" evidence="1">
    <location>
        <position position="162"/>
    </location>
</feature>
<keyword id="KW-0342">GTP-binding</keyword>
<keyword id="KW-0378">Hydrolase</keyword>
<keyword id="KW-0456">Lyase</keyword>
<keyword id="KW-0460">Magnesium</keyword>
<keyword id="KW-0464">Manganese</keyword>
<keyword id="KW-0479">Metal-binding</keyword>
<keyword id="KW-0511">Multifunctional enzyme</keyword>
<keyword id="KW-0547">Nucleotide-binding</keyword>
<keyword id="KW-0686">Riboflavin biosynthesis</keyword>
<keyword id="KW-0862">Zinc</keyword>
<proteinExistence type="inferred from homology"/>